<keyword id="KW-0687">Ribonucleoprotein</keyword>
<keyword id="KW-0689">Ribosomal protein</keyword>
<accession>B1VYT7</accession>
<gene>
    <name evidence="1" type="primary">rpsB</name>
    <name type="ordered locus">SGR_1863</name>
</gene>
<comment type="similarity">
    <text evidence="1">Belongs to the universal ribosomal protein uS2 family.</text>
</comment>
<name>RS2_STRGG</name>
<dbReference type="EMBL" id="AP009493">
    <property type="protein sequence ID" value="BAG18692.1"/>
    <property type="molecule type" value="Genomic_DNA"/>
</dbReference>
<dbReference type="RefSeq" id="WP_012378829.1">
    <property type="nucleotide sequence ID" value="NC_010572.1"/>
</dbReference>
<dbReference type="SMR" id="B1VYT7"/>
<dbReference type="KEGG" id="sgr:SGR_1863"/>
<dbReference type="PATRIC" id="fig|455632.4.peg.1896"/>
<dbReference type="eggNOG" id="COG0052">
    <property type="taxonomic scope" value="Bacteria"/>
</dbReference>
<dbReference type="HOGENOM" id="CLU_040318_2_3_11"/>
<dbReference type="Proteomes" id="UP000001685">
    <property type="component" value="Chromosome"/>
</dbReference>
<dbReference type="GO" id="GO:0022627">
    <property type="term" value="C:cytosolic small ribosomal subunit"/>
    <property type="evidence" value="ECO:0007669"/>
    <property type="project" value="TreeGrafter"/>
</dbReference>
<dbReference type="GO" id="GO:0003735">
    <property type="term" value="F:structural constituent of ribosome"/>
    <property type="evidence" value="ECO:0007669"/>
    <property type="project" value="InterPro"/>
</dbReference>
<dbReference type="GO" id="GO:0006412">
    <property type="term" value="P:translation"/>
    <property type="evidence" value="ECO:0007669"/>
    <property type="project" value="UniProtKB-UniRule"/>
</dbReference>
<dbReference type="CDD" id="cd01425">
    <property type="entry name" value="RPS2"/>
    <property type="match status" value="1"/>
</dbReference>
<dbReference type="FunFam" id="1.10.287.610:FF:000001">
    <property type="entry name" value="30S ribosomal protein S2"/>
    <property type="match status" value="1"/>
</dbReference>
<dbReference type="Gene3D" id="3.40.50.10490">
    <property type="entry name" value="Glucose-6-phosphate isomerase like protein, domain 1"/>
    <property type="match status" value="1"/>
</dbReference>
<dbReference type="Gene3D" id="1.10.287.610">
    <property type="entry name" value="Helix hairpin bin"/>
    <property type="match status" value="1"/>
</dbReference>
<dbReference type="HAMAP" id="MF_00291_B">
    <property type="entry name" value="Ribosomal_uS2_B"/>
    <property type="match status" value="1"/>
</dbReference>
<dbReference type="InterPro" id="IPR001865">
    <property type="entry name" value="Ribosomal_uS2"/>
</dbReference>
<dbReference type="InterPro" id="IPR005706">
    <property type="entry name" value="Ribosomal_uS2_bac/mit/plastid"/>
</dbReference>
<dbReference type="InterPro" id="IPR018130">
    <property type="entry name" value="Ribosomal_uS2_CS"/>
</dbReference>
<dbReference type="InterPro" id="IPR023591">
    <property type="entry name" value="Ribosomal_uS2_flav_dom_sf"/>
</dbReference>
<dbReference type="NCBIfam" id="TIGR01011">
    <property type="entry name" value="rpsB_bact"/>
    <property type="match status" value="1"/>
</dbReference>
<dbReference type="PANTHER" id="PTHR12534">
    <property type="entry name" value="30S RIBOSOMAL PROTEIN S2 PROKARYOTIC AND ORGANELLAR"/>
    <property type="match status" value="1"/>
</dbReference>
<dbReference type="PANTHER" id="PTHR12534:SF0">
    <property type="entry name" value="SMALL RIBOSOMAL SUBUNIT PROTEIN US2M"/>
    <property type="match status" value="1"/>
</dbReference>
<dbReference type="Pfam" id="PF00318">
    <property type="entry name" value="Ribosomal_S2"/>
    <property type="match status" value="1"/>
</dbReference>
<dbReference type="PRINTS" id="PR00395">
    <property type="entry name" value="RIBOSOMALS2"/>
</dbReference>
<dbReference type="SUPFAM" id="SSF52313">
    <property type="entry name" value="Ribosomal protein S2"/>
    <property type="match status" value="1"/>
</dbReference>
<dbReference type="PROSITE" id="PS00962">
    <property type="entry name" value="RIBOSOMAL_S2_1"/>
    <property type="match status" value="1"/>
</dbReference>
<evidence type="ECO:0000255" key="1">
    <source>
        <dbReference type="HAMAP-Rule" id="MF_00291"/>
    </source>
</evidence>
<evidence type="ECO:0000256" key="2">
    <source>
        <dbReference type="SAM" id="MobiDB-lite"/>
    </source>
</evidence>
<evidence type="ECO:0000305" key="3"/>
<organism>
    <name type="scientific">Streptomyces griseus subsp. griseus (strain JCM 4626 / CBS 651.72 / NBRC 13350 / KCC S-0626 / ISP 5235)</name>
    <dbReference type="NCBI Taxonomy" id="455632"/>
    <lineage>
        <taxon>Bacteria</taxon>
        <taxon>Bacillati</taxon>
        <taxon>Actinomycetota</taxon>
        <taxon>Actinomycetes</taxon>
        <taxon>Kitasatosporales</taxon>
        <taxon>Streptomycetaceae</taxon>
        <taxon>Streptomyces</taxon>
    </lineage>
</organism>
<proteinExistence type="inferred from homology"/>
<reference key="1">
    <citation type="journal article" date="2008" name="J. Bacteriol.">
        <title>Genome sequence of the streptomycin-producing microorganism Streptomyces griseus IFO 13350.</title>
        <authorList>
            <person name="Ohnishi Y."/>
            <person name="Ishikawa J."/>
            <person name="Hara H."/>
            <person name="Suzuki H."/>
            <person name="Ikenoya M."/>
            <person name="Ikeda H."/>
            <person name="Yamashita A."/>
            <person name="Hattori M."/>
            <person name="Horinouchi S."/>
        </authorList>
    </citation>
    <scope>NUCLEOTIDE SEQUENCE [LARGE SCALE GENOMIC DNA]</scope>
    <source>
        <strain>JCM 4626 / CBS 651.72 / NBRC 13350 / KCC S-0626 / ISP 5235</strain>
    </source>
</reference>
<feature type="chain" id="PRO_1000115060" description="Small ribosomal subunit protein uS2">
    <location>
        <begin position="1"/>
        <end position="306"/>
    </location>
</feature>
<feature type="region of interest" description="Disordered" evidence="2">
    <location>
        <begin position="257"/>
        <end position="306"/>
    </location>
</feature>
<feature type="compositionally biased region" description="Basic and acidic residues" evidence="2">
    <location>
        <begin position="275"/>
        <end position="286"/>
    </location>
</feature>
<feature type="compositionally biased region" description="Low complexity" evidence="2">
    <location>
        <begin position="287"/>
        <end position="300"/>
    </location>
</feature>
<protein>
    <recommendedName>
        <fullName evidence="1">Small ribosomal subunit protein uS2</fullName>
    </recommendedName>
    <alternativeName>
        <fullName evidence="3">30S ribosomal protein S2</fullName>
    </alternativeName>
</protein>
<sequence length="306" mass="33590">MAVVTMRELLESGVHFGHQTRRWNPKMKRFIFTERNGIYIIDLLQSLSYIDRAYEFVKETVAHGGSIMFVGTKKQAQEAIAEQATRVGMPYVNQRWLGGMLTNFSTVYKRLQRLKELELIDFEDVAASGLTKKELLVLSREKAKLEKTLGGIREMQKVPSAVWIVDTKKEHIAVGEARKLHIPVVAILDTNCDPDEVDYKIPGNDDAIRSVTLLTRVIADAVAEGLIARSGAATGDSKPGEKAAGEPLAEWERDLLEGDKKDETAAAAEVQTSAETEKVADAEKPAEAVAEAEAEAPAADADAEQA</sequence>